<name>C76C4_ARATH</name>
<proteinExistence type="inferred from homology"/>
<reference key="1">
    <citation type="journal article" date="1999" name="Nature">
        <title>Sequence and analysis of chromosome 2 of the plant Arabidopsis thaliana.</title>
        <authorList>
            <person name="Lin X."/>
            <person name="Kaul S."/>
            <person name="Rounsley S.D."/>
            <person name="Shea T.P."/>
            <person name="Benito M.-I."/>
            <person name="Town C.D."/>
            <person name="Fujii C.Y."/>
            <person name="Mason T.M."/>
            <person name="Bowman C.L."/>
            <person name="Barnstead M.E."/>
            <person name="Feldblyum T.V."/>
            <person name="Buell C.R."/>
            <person name="Ketchum K.A."/>
            <person name="Lee J.J."/>
            <person name="Ronning C.M."/>
            <person name="Koo H.L."/>
            <person name="Moffat K.S."/>
            <person name="Cronin L.A."/>
            <person name="Shen M."/>
            <person name="Pai G."/>
            <person name="Van Aken S."/>
            <person name="Umayam L."/>
            <person name="Tallon L.J."/>
            <person name="Gill J.E."/>
            <person name="Adams M.D."/>
            <person name="Carrera A.J."/>
            <person name="Creasy T.H."/>
            <person name="Goodman H.M."/>
            <person name="Somerville C.R."/>
            <person name="Copenhaver G.P."/>
            <person name="Preuss D."/>
            <person name="Nierman W.C."/>
            <person name="White O."/>
            <person name="Eisen J.A."/>
            <person name="Salzberg S.L."/>
            <person name="Fraser C.M."/>
            <person name="Venter J.C."/>
        </authorList>
    </citation>
    <scope>NUCLEOTIDE SEQUENCE [LARGE SCALE GENOMIC DNA]</scope>
    <source>
        <strain>cv. Columbia</strain>
    </source>
</reference>
<reference key="2">
    <citation type="journal article" date="2017" name="Plant J.">
        <title>Araport11: a complete reannotation of the Arabidopsis thaliana reference genome.</title>
        <authorList>
            <person name="Cheng C.Y."/>
            <person name="Krishnakumar V."/>
            <person name="Chan A.P."/>
            <person name="Thibaud-Nissen F."/>
            <person name="Schobel S."/>
            <person name="Town C.D."/>
        </authorList>
    </citation>
    <scope>GENOME REANNOTATION</scope>
    <source>
        <strain>cv. Columbia</strain>
    </source>
</reference>
<evidence type="ECO:0000250" key="1"/>
<evidence type="ECO:0000255" key="2"/>
<evidence type="ECO:0000305" key="3"/>
<dbReference type="EC" id="1.14.-.-"/>
<dbReference type="EMBL" id="AC003680">
    <property type="protein sequence ID" value="AAC06156.1"/>
    <property type="molecule type" value="Genomic_DNA"/>
</dbReference>
<dbReference type="EMBL" id="CP002685">
    <property type="protein sequence ID" value="AEC10569.1"/>
    <property type="molecule type" value="Genomic_DNA"/>
</dbReference>
<dbReference type="PIR" id="T00868">
    <property type="entry name" value="T00868"/>
</dbReference>
<dbReference type="RefSeq" id="NP_182079.1">
    <property type="nucleotide sequence ID" value="NM_130117.2"/>
</dbReference>
<dbReference type="SMR" id="O64635"/>
<dbReference type="FunCoup" id="O64635">
    <property type="interactions" value="472"/>
</dbReference>
<dbReference type="STRING" id="3702.O64635"/>
<dbReference type="PaxDb" id="3702-AT2G45550.1"/>
<dbReference type="EnsemblPlants" id="AT2G45550.1">
    <property type="protein sequence ID" value="AT2G45550.1"/>
    <property type="gene ID" value="AT2G45550"/>
</dbReference>
<dbReference type="GeneID" id="819163"/>
<dbReference type="Gramene" id="AT2G45550.1">
    <property type="protein sequence ID" value="AT2G45550.1"/>
    <property type="gene ID" value="AT2G45550"/>
</dbReference>
<dbReference type="KEGG" id="ath:AT2G45550"/>
<dbReference type="Araport" id="AT2G45550"/>
<dbReference type="TAIR" id="AT2G45550">
    <property type="gene designation" value="CYP76C4"/>
</dbReference>
<dbReference type="eggNOG" id="KOG0156">
    <property type="taxonomic scope" value="Eukaryota"/>
</dbReference>
<dbReference type="HOGENOM" id="CLU_001570_4_2_1"/>
<dbReference type="InParanoid" id="O64635"/>
<dbReference type="OMA" id="FTDLFCA"/>
<dbReference type="PhylomeDB" id="O64635"/>
<dbReference type="BioCyc" id="ARA:AT2G45550-MONOMER"/>
<dbReference type="PRO" id="PR:O64635"/>
<dbReference type="Proteomes" id="UP000006548">
    <property type="component" value="Chromosome 2"/>
</dbReference>
<dbReference type="ExpressionAtlas" id="O64635">
    <property type="expression patterns" value="baseline and differential"/>
</dbReference>
<dbReference type="GO" id="GO:0016020">
    <property type="term" value="C:membrane"/>
    <property type="evidence" value="ECO:0007669"/>
    <property type="project" value="UniProtKB-SubCell"/>
</dbReference>
<dbReference type="GO" id="GO:0102311">
    <property type="term" value="F:8-hydroxygeraniol dehydrogenase activity"/>
    <property type="evidence" value="ECO:0000314"/>
    <property type="project" value="TAIR"/>
</dbReference>
<dbReference type="GO" id="GO:0020037">
    <property type="term" value="F:heme binding"/>
    <property type="evidence" value="ECO:0007669"/>
    <property type="project" value="InterPro"/>
</dbReference>
<dbReference type="GO" id="GO:0005506">
    <property type="term" value="F:iron ion binding"/>
    <property type="evidence" value="ECO:0007669"/>
    <property type="project" value="InterPro"/>
</dbReference>
<dbReference type="GO" id="GO:0004497">
    <property type="term" value="F:monooxygenase activity"/>
    <property type="evidence" value="ECO:0007669"/>
    <property type="project" value="UniProtKB-KW"/>
</dbReference>
<dbReference type="GO" id="GO:0016705">
    <property type="term" value="F:oxidoreductase activity, acting on paired donors, with incorporation or reduction of molecular oxygen"/>
    <property type="evidence" value="ECO:0007669"/>
    <property type="project" value="InterPro"/>
</dbReference>
<dbReference type="CDD" id="cd11073">
    <property type="entry name" value="CYP76-like"/>
    <property type="match status" value="1"/>
</dbReference>
<dbReference type="FunFam" id="1.10.630.10:FF:000007">
    <property type="entry name" value="Cytochrome P450 76C4"/>
    <property type="match status" value="1"/>
</dbReference>
<dbReference type="Gene3D" id="1.10.630.10">
    <property type="entry name" value="Cytochrome P450"/>
    <property type="match status" value="1"/>
</dbReference>
<dbReference type="InterPro" id="IPR001128">
    <property type="entry name" value="Cyt_P450"/>
</dbReference>
<dbReference type="InterPro" id="IPR017972">
    <property type="entry name" value="Cyt_P450_CS"/>
</dbReference>
<dbReference type="InterPro" id="IPR002401">
    <property type="entry name" value="Cyt_P450_E_grp-I"/>
</dbReference>
<dbReference type="InterPro" id="IPR036396">
    <property type="entry name" value="Cyt_P450_sf"/>
</dbReference>
<dbReference type="PANTHER" id="PTHR47950:SF22">
    <property type="entry name" value="CYTOCHROME P450 76C1-RELATED"/>
    <property type="match status" value="1"/>
</dbReference>
<dbReference type="PANTHER" id="PTHR47950">
    <property type="entry name" value="CYTOCHROME P450, FAMILY 76, SUBFAMILY C, POLYPEPTIDE 5-RELATED"/>
    <property type="match status" value="1"/>
</dbReference>
<dbReference type="Pfam" id="PF00067">
    <property type="entry name" value="p450"/>
    <property type="match status" value="1"/>
</dbReference>
<dbReference type="PRINTS" id="PR00463">
    <property type="entry name" value="EP450I"/>
</dbReference>
<dbReference type="PRINTS" id="PR00385">
    <property type="entry name" value="P450"/>
</dbReference>
<dbReference type="SUPFAM" id="SSF48264">
    <property type="entry name" value="Cytochrome P450"/>
    <property type="match status" value="1"/>
</dbReference>
<dbReference type="PROSITE" id="PS00086">
    <property type="entry name" value="CYTOCHROME_P450"/>
    <property type="match status" value="1"/>
</dbReference>
<keyword id="KW-0349">Heme</keyword>
<keyword id="KW-0408">Iron</keyword>
<keyword id="KW-0472">Membrane</keyword>
<keyword id="KW-0479">Metal-binding</keyword>
<keyword id="KW-0503">Monooxygenase</keyword>
<keyword id="KW-0560">Oxidoreductase</keyword>
<keyword id="KW-1185">Reference proteome</keyword>
<keyword id="KW-0812">Transmembrane</keyword>
<keyword id="KW-1133">Transmembrane helix</keyword>
<comment type="cofactor">
    <cofactor evidence="1">
        <name>heme</name>
        <dbReference type="ChEBI" id="CHEBI:30413"/>
    </cofactor>
</comment>
<comment type="subcellular location">
    <subcellularLocation>
        <location evidence="3">Membrane</location>
        <topology evidence="3">Single-pass membrane protein</topology>
    </subcellularLocation>
</comment>
<comment type="similarity">
    <text evidence="3">Belongs to the cytochrome P450 family.</text>
</comment>
<sequence>MDIISGQALFLLFCFISSCFLISTTARSRRSSGRAATLPPGPPRLPIIGNIHQVGKNPHSSFADLAKIYGPIMSLKFGCLNSVVITSPEAAREVLRTHDQILSGRKSNDSIRCFGHEEVSVIWLPPSSARWRMLRKLSVTLMFSPQRTEATKALRMKKVQELVSFMNESSERKEAVDISRASYTTVLNIISNILFSVDLGSYDSKKSNEFQDTVIGAMEAAGKPDAANYFPFMGFLDLQGNRKAMRGLTERLFRVFRGFMDAKIAEKSLGNYSKDVSNRDFLDSLLILNEGDEAELDNNDIEHLLLDMFTAGTDTSSSTLEWAMAELLRNPKTMVKAQAEMDRVLGQNSVVQESDISGLPYLQAVVKETFRLHPAAPLLVPRKAESDVEVLGFMVPKDTQVLVNVWAIGRDPSVWENPSQFEPERFMGKDIDVKGRDYELTPFGGGRRICPGLPLAVKTVSLMLASLLYSFDWKLPNGVVSEDLDMDETFGITLHRTNTLYAIPVKKQTIN</sequence>
<gene>
    <name type="primary">CYP76C4</name>
    <name type="ordered locus">At2g45550</name>
    <name type="ORF">F17K2.8</name>
</gene>
<organism>
    <name type="scientific">Arabidopsis thaliana</name>
    <name type="common">Mouse-ear cress</name>
    <dbReference type="NCBI Taxonomy" id="3702"/>
    <lineage>
        <taxon>Eukaryota</taxon>
        <taxon>Viridiplantae</taxon>
        <taxon>Streptophyta</taxon>
        <taxon>Embryophyta</taxon>
        <taxon>Tracheophyta</taxon>
        <taxon>Spermatophyta</taxon>
        <taxon>Magnoliopsida</taxon>
        <taxon>eudicotyledons</taxon>
        <taxon>Gunneridae</taxon>
        <taxon>Pentapetalae</taxon>
        <taxon>rosids</taxon>
        <taxon>malvids</taxon>
        <taxon>Brassicales</taxon>
        <taxon>Brassicaceae</taxon>
        <taxon>Camelineae</taxon>
        <taxon>Arabidopsis</taxon>
    </lineage>
</organism>
<accession>O64635</accession>
<feature type="chain" id="PRO_0000052144" description="Cytochrome P450 76C4">
    <location>
        <begin position="1"/>
        <end position="511"/>
    </location>
</feature>
<feature type="transmembrane region" description="Helical" evidence="2">
    <location>
        <begin position="3"/>
        <end position="23"/>
    </location>
</feature>
<feature type="binding site" description="axial binding residue" evidence="1">
    <location>
        <position position="450"/>
    </location>
    <ligand>
        <name>heme</name>
        <dbReference type="ChEBI" id="CHEBI:30413"/>
    </ligand>
    <ligandPart>
        <name>Fe</name>
        <dbReference type="ChEBI" id="CHEBI:18248"/>
    </ligandPart>
</feature>
<protein>
    <recommendedName>
        <fullName>Cytochrome P450 76C4</fullName>
        <ecNumber>1.14.-.-</ecNumber>
    </recommendedName>
</protein>